<feature type="initiator methionine" description="Removed" evidence="1">
    <location>
        <position position="1"/>
    </location>
</feature>
<feature type="chain" id="PRO_0000174185" description="Transmembrane protein 50B">
    <location>
        <begin position="2"/>
        <end position="158"/>
    </location>
</feature>
<feature type="transmembrane region" description="Helical" evidence="3">
    <location>
        <begin position="28"/>
        <end position="48"/>
    </location>
</feature>
<feature type="transmembrane region" description="Helical" evidence="3">
    <location>
        <begin position="56"/>
        <end position="76"/>
    </location>
</feature>
<feature type="transmembrane region" description="Helical" evidence="3">
    <location>
        <begin position="98"/>
        <end position="118"/>
    </location>
</feature>
<feature type="transmembrane region" description="Helical" evidence="3">
    <location>
        <begin position="128"/>
        <end position="148"/>
    </location>
</feature>
<feature type="modified residue" description="N-acetylalanine" evidence="1">
    <location>
        <position position="2"/>
    </location>
</feature>
<evidence type="ECO:0000250" key="1">
    <source>
        <dbReference type="UniProtKB" id="P56557"/>
    </source>
</evidence>
<evidence type="ECO:0000250" key="2">
    <source>
        <dbReference type="UniProtKB" id="Q9D1X9"/>
    </source>
</evidence>
<evidence type="ECO:0000255" key="3"/>
<evidence type="ECO:0000305" key="4"/>
<reference key="1">
    <citation type="submission" date="2004-11" db="EMBL/GenBank/DDBJ databases">
        <authorList>
            <consortium name="The German cDNA consortium"/>
        </authorList>
    </citation>
    <scope>NUCLEOTIDE SEQUENCE [LARGE SCALE MRNA]</scope>
    <source>
        <tissue>Brain cortex</tissue>
    </source>
</reference>
<accession>Q5R4C3</accession>
<name>TM50B_PONAB</name>
<comment type="subunit">
    <text evidence="2">May form homotrimers or homodimers.</text>
</comment>
<comment type="subcellular location">
    <subcellularLocation>
        <location evidence="2">Endoplasmic reticulum membrane</location>
        <topology evidence="3">Multi-pass membrane protein</topology>
    </subcellularLocation>
    <subcellularLocation>
        <location evidence="2">Golgi apparatus membrane</location>
        <topology evidence="3">Multi-pass membrane protein</topology>
    </subcellularLocation>
</comment>
<comment type="similarity">
    <text evidence="4">Belongs to the UPF0220 family.</text>
</comment>
<protein>
    <recommendedName>
        <fullName>Transmembrane protein 50B</fullName>
    </recommendedName>
</protein>
<gene>
    <name type="primary">TMEM50B</name>
</gene>
<keyword id="KW-0007">Acetylation</keyword>
<keyword id="KW-0256">Endoplasmic reticulum</keyword>
<keyword id="KW-0333">Golgi apparatus</keyword>
<keyword id="KW-0472">Membrane</keyword>
<keyword id="KW-1185">Reference proteome</keyword>
<keyword id="KW-0812">Transmembrane</keyword>
<keyword id="KW-1133">Transmembrane helix</keyword>
<sequence length="158" mass="17936">MAGFLDNFRWPECECIDWSERRNAVASVVAGILFFTGWWIMIDAAVVYPKPEQLNHAFHTCGVFSTLAFFMINAVSNAQVRGDSYESGCLGRTGARVWLFIGFMLMFGSLIASMWILFGAYVTQNTDVYPGLAVFFQNALIFFSTLIYKFGRTEELWT</sequence>
<proteinExistence type="evidence at transcript level"/>
<dbReference type="EMBL" id="CR861329">
    <property type="protein sequence ID" value="CAH93393.1"/>
    <property type="molecule type" value="mRNA"/>
</dbReference>
<dbReference type="RefSeq" id="NP_001126991.1">
    <property type="nucleotide sequence ID" value="NM_001133519.1"/>
</dbReference>
<dbReference type="RefSeq" id="XP_054398398.1">
    <property type="nucleotide sequence ID" value="XM_054542423.2"/>
</dbReference>
<dbReference type="RefSeq" id="XP_054398399.1">
    <property type="nucleotide sequence ID" value="XM_054542424.2"/>
</dbReference>
<dbReference type="FunCoup" id="Q5R4C3">
    <property type="interactions" value="1603"/>
</dbReference>
<dbReference type="STRING" id="9601.ENSPPYP00000012698"/>
<dbReference type="Ensembl" id="ENSPPYT00000013203.3">
    <property type="protein sequence ID" value="ENSPPYP00000012698.3"/>
    <property type="gene ID" value="ENSPPYG00000011377.3"/>
</dbReference>
<dbReference type="GeneID" id="100174014"/>
<dbReference type="KEGG" id="pon:100174014"/>
<dbReference type="CTD" id="757"/>
<dbReference type="GeneTree" id="ENSGT00940000155131"/>
<dbReference type="InParanoid" id="Q5R4C3"/>
<dbReference type="OrthoDB" id="268928at2759"/>
<dbReference type="Proteomes" id="UP000001595">
    <property type="component" value="Chromosome 21"/>
</dbReference>
<dbReference type="GO" id="GO:0005789">
    <property type="term" value="C:endoplasmic reticulum membrane"/>
    <property type="evidence" value="ECO:0007669"/>
    <property type="project" value="UniProtKB-SubCell"/>
</dbReference>
<dbReference type="GO" id="GO:0000139">
    <property type="term" value="C:Golgi membrane"/>
    <property type="evidence" value="ECO:0007669"/>
    <property type="project" value="UniProtKB-SubCell"/>
</dbReference>
<dbReference type="InterPro" id="IPR007919">
    <property type="entry name" value="UPF0220"/>
</dbReference>
<dbReference type="PANTHER" id="PTHR13180">
    <property type="entry name" value="SMALL MEMBRANE PROTEIN-RELATED"/>
    <property type="match status" value="1"/>
</dbReference>
<dbReference type="Pfam" id="PF05255">
    <property type="entry name" value="UPF0220"/>
    <property type="match status" value="1"/>
</dbReference>
<organism>
    <name type="scientific">Pongo abelii</name>
    <name type="common">Sumatran orangutan</name>
    <name type="synonym">Pongo pygmaeus abelii</name>
    <dbReference type="NCBI Taxonomy" id="9601"/>
    <lineage>
        <taxon>Eukaryota</taxon>
        <taxon>Metazoa</taxon>
        <taxon>Chordata</taxon>
        <taxon>Craniata</taxon>
        <taxon>Vertebrata</taxon>
        <taxon>Euteleostomi</taxon>
        <taxon>Mammalia</taxon>
        <taxon>Eutheria</taxon>
        <taxon>Euarchontoglires</taxon>
        <taxon>Primates</taxon>
        <taxon>Haplorrhini</taxon>
        <taxon>Catarrhini</taxon>
        <taxon>Hominidae</taxon>
        <taxon>Pongo</taxon>
    </lineage>
</organism>